<organism>
    <name type="scientific">Vibrio campbellii (strain ATCC BAA-1116)</name>
    <dbReference type="NCBI Taxonomy" id="2902295"/>
    <lineage>
        <taxon>Bacteria</taxon>
        <taxon>Pseudomonadati</taxon>
        <taxon>Pseudomonadota</taxon>
        <taxon>Gammaproteobacteria</taxon>
        <taxon>Vibrionales</taxon>
        <taxon>Vibrionaceae</taxon>
        <taxon>Vibrio</taxon>
    </lineage>
</organism>
<proteinExistence type="inferred from homology"/>
<gene>
    <name type="primary">luxS</name>
    <name type="ordered locus">VIBHAR_03484</name>
</gene>
<evidence type="ECO:0000250" key="1"/>
<evidence type="ECO:0000269" key="2">
    <source>
    </source>
</evidence>
<evidence type="ECO:0000305" key="3"/>
<reference key="1">
    <citation type="journal article" date="1999" name="Proc. Natl. Acad. Sci. U.S.A.">
        <title>Quorum sensing in Escherichia coli, Salmonella typhimurium, and Vibrio harveyi: a new family of genes responsible for autoinducer production.</title>
        <authorList>
            <person name="Surette M.G."/>
            <person name="Miller M.B."/>
            <person name="Bassler B.L."/>
        </authorList>
    </citation>
    <scope>NUCLEOTIDE SEQUENCE [GENOMIC DNA]</scope>
    <scope>FUNCTION</scope>
</reference>
<reference key="2">
    <citation type="submission" date="2007-08" db="EMBL/GenBank/DDBJ databases">
        <authorList>
            <consortium name="The Vibrio harveyi Genome Sequencing Project"/>
            <person name="Bassler B."/>
            <person name="Clifton S.W."/>
            <person name="Fulton L."/>
            <person name="Delehaunty K."/>
            <person name="Fronick C."/>
            <person name="Harrison M."/>
            <person name="Markivic C."/>
            <person name="Fulton R."/>
            <person name="Tin-Wollam A.-M."/>
            <person name="Shah N."/>
            <person name="Pepin K."/>
            <person name="Nash W."/>
            <person name="Thiruvilangam P."/>
            <person name="Bhonagiri V."/>
            <person name="Waters C."/>
            <person name="Tu K.C."/>
            <person name="Irgon J."/>
            <person name="Wilson R.K."/>
        </authorList>
    </citation>
    <scope>NUCLEOTIDE SEQUENCE [LARGE SCALE GENOMIC DNA]</scope>
    <source>
        <strain>ATCC BAA-1116 / BB120</strain>
    </source>
</reference>
<protein>
    <recommendedName>
        <fullName>S-ribosylhomocysteine lyase</fullName>
        <ecNumber>4.4.1.21</ecNumber>
    </recommendedName>
    <alternativeName>
        <fullName>AI-2 synthesis protein</fullName>
    </alternativeName>
    <alternativeName>
        <fullName>Autoinducer-2 production protein LuxS</fullName>
    </alternativeName>
</protein>
<dbReference type="EC" id="4.4.1.21"/>
<dbReference type="EMBL" id="AF120098">
    <property type="protein sequence ID" value="AAD17292.1"/>
    <property type="molecule type" value="Genomic_DNA"/>
</dbReference>
<dbReference type="EMBL" id="CP000789">
    <property type="protein sequence ID" value="ABU72429.1"/>
    <property type="status" value="ALT_INIT"/>
    <property type="molecule type" value="Genomic_DNA"/>
</dbReference>
<dbReference type="RefSeq" id="WP_012128886.1">
    <property type="nucleotide sequence ID" value="NC_022269.1"/>
</dbReference>
<dbReference type="SMR" id="Q9Z5X1"/>
<dbReference type="BindingDB" id="Q9Z5X1"/>
<dbReference type="ChEMBL" id="CHEMBL4682"/>
<dbReference type="KEGG" id="vha:VIBHAR_03484"/>
<dbReference type="PATRIC" id="fig|338187.25.peg.2716"/>
<dbReference type="BRENDA" id="4.4.1.21">
    <property type="organism ID" value="6632"/>
</dbReference>
<dbReference type="Proteomes" id="UP000008152">
    <property type="component" value="Chromosome I"/>
</dbReference>
<dbReference type="GO" id="GO:0005506">
    <property type="term" value="F:iron ion binding"/>
    <property type="evidence" value="ECO:0007669"/>
    <property type="project" value="InterPro"/>
</dbReference>
<dbReference type="GO" id="GO:0043768">
    <property type="term" value="F:S-ribosylhomocysteine lyase activity"/>
    <property type="evidence" value="ECO:0007669"/>
    <property type="project" value="UniProtKB-UniRule"/>
</dbReference>
<dbReference type="GO" id="GO:0009372">
    <property type="term" value="P:quorum sensing"/>
    <property type="evidence" value="ECO:0007669"/>
    <property type="project" value="UniProtKB-UniRule"/>
</dbReference>
<dbReference type="FunFam" id="3.30.1360.80:FF:000001">
    <property type="entry name" value="S-ribosylhomocysteine lyase"/>
    <property type="match status" value="1"/>
</dbReference>
<dbReference type="Gene3D" id="3.30.1360.80">
    <property type="entry name" value="S-ribosylhomocysteinase (LuxS)"/>
    <property type="match status" value="1"/>
</dbReference>
<dbReference type="HAMAP" id="MF_00091">
    <property type="entry name" value="LuxS"/>
    <property type="match status" value="1"/>
</dbReference>
<dbReference type="InterPro" id="IPR037005">
    <property type="entry name" value="LuxS_sf"/>
</dbReference>
<dbReference type="InterPro" id="IPR011249">
    <property type="entry name" value="Metalloenz_LuxS/M16"/>
</dbReference>
<dbReference type="InterPro" id="IPR003815">
    <property type="entry name" value="S-ribosylhomocysteinase"/>
</dbReference>
<dbReference type="NCBIfam" id="NF002602">
    <property type="entry name" value="PRK02260.1-2"/>
    <property type="match status" value="1"/>
</dbReference>
<dbReference type="PANTHER" id="PTHR35799">
    <property type="entry name" value="S-RIBOSYLHOMOCYSTEINE LYASE"/>
    <property type="match status" value="1"/>
</dbReference>
<dbReference type="PANTHER" id="PTHR35799:SF1">
    <property type="entry name" value="S-RIBOSYLHOMOCYSTEINE LYASE"/>
    <property type="match status" value="1"/>
</dbReference>
<dbReference type="Pfam" id="PF02664">
    <property type="entry name" value="LuxS"/>
    <property type="match status" value="1"/>
</dbReference>
<dbReference type="PIRSF" id="PIRSF006160">
    <property type="entry name" value="AI2"/>
    <property type="match status" value="1"/>
</dbReference>
<dbReference type="PRINTS" id="PR01487">
    <property type="entry name" value="LUXSPROTEIN"/>
</dbReference>
<dbReference type="SUPFAM" id="SSF63411">
    <property type="entry name" value="LuxS/MPP-like metallohydrolase"/>
    <property type="match status" value="1"/>
</dbReference>
<sequence length="172" mass="19143">MPLLDSFTVDHTRMNAPAVRVAKTMQTPKGDTITVFDLRFTAPNKDILSEKGIHTLEHLYAGFMRNHLNGDSVEIIDISPMGCRTGFYMSLIGTPSEQQVADAWIAAMEDVLKVENQNKIPELNEYQCGTAAMHSLDEAKQIAKNILEVGVAVNKNDELALPESMLRELRID</sequence>
<accession>Q9Z5X1</accession>
<accession>A7MYV6</accession>
<comment type="function">
    <text evidence="2">Involved in the synthesis of autoinducer 2 (AI-2) which is secreted by bacteria and is used to communicate both the cell density and the metabolic potential of the environment. The regulation of gene expression in response to changes in cell density is called quorum sensing. Catalyzes the transformation of S-ribosylhomocysteine (RHC) to homocysteine (HC) and 4,5-dihydroxy-2,3-pentadione (DPD).</text>
</comment>
<comment type="catalytic activity">
    <reaction>
        <text>S-(5-deoxy-D-ribos-5-yl)-L-homocysteine = (S)-4,5-dihydroxypentane-2,3-dione + L-homocysteine</text>
        <dbReference type="Rhea" id="RHEA:17753"/>
        <dbReference type="ChEBI" id="CHEBI:29484"/>
        <dbReference type="ChEBI" id="CHEBI:58195"/>
        <dbReference type="ChEBI" id="CHEBI:58199"/>
        <dbReference type="EC" id="4.4.1.21"/>
    </reaction>
</comment>
<comment type="cofactor">
    <cofactor evidence="1">
        <name>Fe cation</name>
        <dbReference type="ChEBI" id="CHEBI:24875"/>
    </cofactor>
    <text evidence="1">Binds 1 Fe cation per subunit.</text>
</comment>
<comment type="subunit">
    <text evidence="1">Homodimer.</text>
</comment>
<comment type="similarity">
    <text evidence="3">Belongs to the LuxS family.</text>
</comment>
<comment type="sequence caution" evidence="3">
    <conflict type="erroneous initiation">
        <sequence resource="EMBL-CDS" id="ABU72429"/>
    </conflict>
</comment>
<keyword id="KW-0071">Autoinducer synthesis</keyword>
<keyword id="KW-0408">Iron</keyword>
<keyword id="KW-0456">Lyase</keyword>
<keyword id="KW-0479">Metal-binding</keyword>
<keyword id="KW-0673">Quorum sensing</keyword>
<feature type="initiator methionine" description="Removed" evidence="1">
    <location>
        <position position="1"/>
    </location>
</feature>
<feature type="chain" id="PRO_0000172275" description="S-ribosylhomocysteine lyase">
    <location>
        <begin position="2"/>
        <end position="172"/>
    </location>
</feature>
<feature type="binding site" evidence="1">
    <location>
        <position position="54"/>
    </location>
    <ligand>
        <name>Fe cation</name>
        <dbReference type="ChEBI" id="CHEBI:24875"/>
    </ligand>
</feature>
<feature type="binding site" evidence="1">
    <location>
        <position position="58"/>
    </location>
    <ligand>
        <name>Fe cation</name>
        <dbReference type="ChEBI" id="CHEBI:24875"/>
    </ligand>
</feature>
<feature type="binding site" evidence="1">
    <location>
        <position position="128"/>
    </location>
    <ligand>
        <name>Fe cation</name>
        <dbReference type="ChEBI" id="CHEBI:24875"/>
    </ligand>
</feature>
<name>LUXS_VIBC1</name>